<accession>Q9QYH9</accession>
<accession>Q059Y9</accession>
<dbReference type="EMBL" id="AF123385">
    <property type="protein sequence ID" value="AAF76453.1"/>
    <property type="molecule type" value="mRNA"/>
</dbReference>
<dbReference type="EMBL" id="AB029155">
    <property type="protein sequence ID" value="BAA88559.1"/>
    <property type="molecule type" value="mRNA"/>
</dbReference>
<dbReference type="EMBL" id="AF227533">
    <property type="protein sequence ID" value="AAF36722.1"/>
    <property type="molecule type" value="mRNA"/>
</dbReference>
<dbReference type="EMBL" id="BC125477">
    <property type="protein sequence ID" value="AAI25478.1"/>
    <property type="molecule type" value="mRNA"/>
</dbReference>
<dbReference type="EMBL" id="BC125479">
    <property type="protein sequence ID" value="AAI25480.1"/>
    <property type="molecule type" value="mRNA"/>
</dbReference>
<dbReference type="CCDS" id="CCDS28928.1"/>
<dbReference type="RefSeq" id="NP_062291.1">
    <property type="nucleotide sequence ID" value="NM_019418.4"/>
</dbReference>
<dbReference type="SMR" id="Q9QYH9"/>
<dbReference type="BioGRID" id="206162">
    <property type="interactions" value="1"/>
</dbReference>
<dbReference type="FunCoup" id="Q9QYH9">
    <property type="interactions" value="1229"/>
</dbReference>
<dbReference type="IntAct" id="Q9QYH9">
    <property type="interactions" value="2"/>
</dbReference>
<dbReference type="STRING" id="10090.ENSMUSP00000005976"/>
<dbReference type="GlyCosmos" id="Q9QYH9">
    <property type="glycosylation" value="2 sites, No reported glycans"/>
</dbReference>
<dbReference type="GlyGen" id="Q9QYH9">
    <property type="glycosylation" value="2 sites"/>
</dbReference>
<dbReference type="PhosphoSitePlus" id="Q9QYH9"/>
<dbReference type="PaxDb" id="10090-ENSMUSP00000005976"/>
<dbReference type="ProteomicsDB" id="259597"/>
<dbReference type="Antibodypedia" id="11882">
    <property type="antibodies" value="717 antibodies from 41 providers"/>
</dbReference>
<dbReference type="DNASU" id="50930"/>
<dbReference type="Ensembl" id="ENSMUST00000005976.8">
    <property type="protein sequence ID" value="ENSMUSP00000005976.7"/>
    <property type="gene ID" value="ENSMUSG00000005824.8"/>
</dbReference>
<dbReference type="GeneID" id="50930"/>
<dbReference type="KEGG" id="mmu:50930"/>
<dbReference type="UCSC" id="uc008def.2">
    <property type="organism name" value="mouse"/>
</dbReference>
<dbReference type="AGR" id="MGI:1355317"/>
<dbReference type="CTD" id="8740"/>
<dbReference type="MGI" id="MGI:1355317">
    <property type="gene designation" value="Tnfsf14"/>
</dbReference>
<dbReference type="VEuPathDB" id="HostDB:ENSMUSG00000005824"/>
<dbReference type="eggNOG" id="ENOG502RZ4W">
    <property type="taxonomic scope" value="Eukaryota"/>
</dbReference>
<dbReference type="GeneTree" id="ENSGT01060000248544"/>
<dbReference type="HOGENOM" id="CLU_070352_5_1_1"/>
<dbReference type="InParanoid" id="Q9QYH9"/>
<dbReference type="OMA" id="SHRRQCC"/>
<dbReference type="OrthoDB" id="6116320at2759"/>
<dbReference type="PhylomeDB" id="Q9QYH9"/>
<dbReference type="TreeFam" id="TF332169"/>
<dbReference type="Reactome" id="R-MMU-5668541">
    <property type="pathway name" value="TNFR2 non-canonical NF-kB pathway"/>
</dbReference>
<dbReference type="Reactome" id="R-MMU-5676594">
    <property type="pathway name" value="TNF receptor superfamily (TNFSF) members mediating non-canonical NF-kB pathway"/>
</dbReference>
<dbReference type="BioGRID-ORCS" id="50930">
    <property type="hits" value="1 hit in 77 CRISPR screens"/>
</dbReference>
<dbReference type="PRO" id="PR:Q9QYH9"/>
<dbReference type="Proteomes" id="UP000000589">
    <property type="component" value="Chromosome 17"/>
</dbReference>
<dbReference type="RNAct" id="Q9QYH9">
    <property type="molecule type" value="protein"/>
</dbReference>
<dbReference type="Bgee" id="ENSMUSG00000005824">
    <property type="expression patterns" value="Expressed in granulocyte and 32 other cell types or tissues"/>
</dbReference>
<dbReference type="ExpressionAtlas" id="Q9QYH9">
    <property type="expression patterns" value="baseline and differential"/>
</dbReference>
<dbReference type="GO" id="GO:0005615">
    <property type="term" value="C:extracellular space"/>
    <property type="evidence" value="ECO:0007669"/>
    <property type="project" value="UniProtKB-KW"/>
</dbReference>
<dbReference type="GO" id="GO:0005886">
    <property type="term" value="C:plasma membrane"/>
    <property type="evidence" value="ECO:0000304"/>
    <property type="project" value="MGI"/>
</dbReference>
<dbReference type="GO" id="GO:0043027">
    <property type="term" value="F:cysteine-type endopeptidase inhibitor activity involved in apoptotic process"/>
    <property type="evidence" value="ECO:0000250"/>
    <property type="project" value="UniProtKB"/>
</dbReference>
<dbReference type="GO" id="GO:0005125">
    <property type="term" value="F:cytokine activity"/>
    <property type="evidence" value="ECO:0007669"/>
    <property type="project" value="UniProtKB-KW"/>
</dbReference>
<dbReference type="GO" id="GO:0005102">
    <property type="term" value="F:signaling receptor binding"/>
    <property type="evidence" value="ECO:0000250"/>
    <property type="project" value="UniProtKB"/>
</dbReference>
<dbReference type="GO" id="GO:0005164">
    <property type="term" value="F:tumor necrosis factor receptor binding"/>
    <property type="evidence" value="ECO:0007669"/>
    <property type="project" value="InterPro"/>
</dbReference>
<dbReference type="GO" id="GO:0071260">
    <property type="term" value="P:cellular response to mechanical stimulus"/>
    <property type="evidence" value="ECO:0007669"/>
    <property type="project" value="Ensembl"/>
</dbReference>
<dbReference type="GO" id="GO:0006955">
    <property type="term" value="P:immune response"/>
    <property type="evidence" value="ECO:0007669"/>
    <property type="project" value="InterPro"/>
</dbReference>
<dbReference type="GO" id="GO:0045663">
    <property type="term" value="P:positive regulation of myoblast differentiation"/>
    <property type="evidence" value="ECO:0000315"/>
    <property type="project" value="MGI"/>
</dbReference>
<dbReference type="GO" id="GO:1901741">
    <property type="term" value="P:positive regulation of myoblast fusion"/>
    <property type="evidence" value="ECO:0000315"/>
    <property type="project" value="MGI"/>
</dbReference>
<dbReference type="GO" id="GO:1901224">
    <property type="term" value="P:positive regulation of non-canonical NF-kappaB signal transduction"/>
    <property type="evidence" value="ECO:0000250"/>
    <property type="project" value="UniProtKB"/>
</dbReference>
<dbReference type="GO" id="GO:0010820">
    <property type="term" value="P:positive regulation of T cell chemotaxis"/>
    <property type="evidence" value="ECO:0000314"/>
    <property type="project" value="MGI"/>
</dbReference>
<dbReference type="GO" id="GO:0010818">
    <property type="term" value="P:T cell chemotaxis"/>
    <property type="evidence" value="ECO:0000314"/>
    <property type="project" value="MGI"/>
</dbReference>
<dbReference type="GO" id="GO:0031295">
    <property type="term" value="P:T cell costimulation"/>
    <property type="evidence" value="ECO:0000314"/>
    <property type="project" value="MGI"/>
</dbReference>
<dbReference type="CDD" id="cd00184">
    <property type="entry name" value="TNF"/>
    <property type="match status" value="1"/>
</dbReference>
<dbReference type="Gene3D" id="2.60.120.40">
    <property type="match status" value="1"/>
</dbReference>
<dbReference type="InterPro" id="IPR006053">
    <property type="entry name" value="TNF"/>
</dbReference>
<dbReference type="InterPro" id="IPR006052">
    <property type="entry name" value="TNF_dom"/>
</dbReference>
<dbReference type="InterPro" id="IPR008983">
    <property type="entry name" value="Tumour_necrosis_fac-like_dom"/>
</dbReference>
<dbReference type="PANTHER" id="PTHR11471">
    <property type="entry name" value="TUMOR NECROSIS FACTOR FAMILY MEMBER"/>
    <property type="match status" value="1"/>
</dbReference>
<dbReference type="PANTHER" id="PTHR11471:SF34">
    <property type="entry name" value="TUMOR NECROSIS FACTOR LIGAND SUPERFAMILY MEMBER 14"/>
    <property type="match status" value="1"/>
</dbReference>
<dbReference type="Pfam" id="PF00229">
    <property type="entry name" value="TNF"/>
    <property type="match status" value="1"/>
</dbReference>
<dbReference type="PRINTS" id="PR01234">
    <property type="entry name" value="TNECROSISFCT"/>
</dbReference>
<dbReference type="SMART" id="SM00207">
    <property type="entry name" value="TNF"/>
    <property type="match status" value="1"/>
</dbReference>
<dbReference type="SUPFAM" id="SSF49842">
    <property type="entry name" value="TNF-like"/>
    <property type="match status" value="1"/>
</dbReference>
<dbReference type="PROSITE" id="PS50049">
    <property type="entry name" value="THD_2"/>
    <property type="match status" value="1"/>
</dbReference>
<protein>
    <recommendedName>
        <fullName>Tumor necrosis factor ligand superfamily member 14</fullName>
    </recommendedName>
    <cdAntigenName>CD258</cdAntigenName>
    <component>
        <recommendedName>
            <fullName>Tumor necrosis factor ligand superfamily member 14, membrane form</fullName>
        </recommendedName>
    </component>
    <component>
        <recommendedName>
            <fullName>Tumor necrosis factor ligand superfamily member 14, soluble form</fullName>
        </recommendedName>
    </component>
</protein>
<keyword id="KW-1003">Cell membrane</keyword>
<keyword id="KW-0202">Cytokine</keyword>
<keyword id="KW-1015">Disulfide bond</keyword>
<keyword id="KW-0325">Glycoprotein</keyword>
<keyword id="KW-0472">Membrane</keyword>
<keyword id="KW-1185">Reference proteome</keyword>
<keyword id="KW-0964">Secreted</keyword>
<keyword id="KW-0735">Signal-anchor</keyword>
<keyword id="KW-0812">Transmembrane</keyword>
<keyword id="KW-1133">Transmembrane helix</keyword>
<gene>
    <name type="primary">Tnfsf14</name>
    <name type="synonym">Light</name>
</gene>
<reference key="1">
    <citation type="journal article" date="2000" name="Nat. Med.">
        <title>Modulation of T-cell-mediated immunity in tumor and graft-versus-host disease models through the LIGHT co-stimulatory pathway.</title>
        <authorList>
            <person name="Tamada K."/>
            <person name="Shimozaki K."/>
            <person name="Chapoval A.I."/>
            <person name="Zhu G."/>
            <person name="Sica G."/>
            <person name="Flies D."/>
            <person name="Boone T."/>
            <person name="Hsu H."/>
            <person name="Fu Y.-X."/>
            <person name="Nagata S."/>
            <person name="Ni J."/>
            <person name="Chen L."/>
        </authorList>
    </citation>
    <scope>NUCLEOTIDE SEQUENCE [MRNA]</scope>
</reference>
<reference key="2">
    <citation type="journal article" date="2000" name="Cytogenet. Cell Genet.">
        <title>Molecular cloning and characterization of a mouse homolog of human TNFSF14, a member of the TNF superfamily.</title>
        <authorList>
            <person name="Misawa K."/>
            <person name="Nosaka T."/>
            <person name="Kojima T."/>
            <person name="Hirai M."/>
            <person name="Kitamura T."/>
        </authorList>
    </citation>
    <scope>NUCLEOTIDE SEQUENCE [MRNA]</scope>
    <source>
        <tissue>Fetal liver</tissue>
    </source>
</reference>
<reference key="3">
    <citation type="submission" date="2000-01" db="EMBL/GenBank/DDBJ databases">
        <title>Mouse LIGHT; molecular genetics, ligand binding and expression.</title>
        <authorList>
            <person name="Force W.R."/>
            <person name="Todd P.K."/>
            <person name="Mikayama T."/>
        </authorList>
    </citation>
    <scope>NUCLEOTIDE SEQUENCE [MRNA]</scope>
    <source>
        <tissue>Lymphoma</tissue>
    </source>
</reference>
<reference key="4">
    <citation type="journal article" date="2004" name="Genome Res.">
        <title>The status, quality, and expansion of the NIH full-length cDNA project: the Mammalian Gene Collection (MGC).</title>
        <authorList>
            <consortium name="The MGC Project Team"/>
        </authorList>
    </citation>
    <scope>NUCLEOTIDE SEQUENCE [LARGE SCALE MRNA]</scope>
    <source>
        <tissue>Thymus</tissue>
    </source>
</reference>
<name>TNF14_MOUSE</name>
<evidence type="ECO:0000250" key="1"/>
<evidence type="ECO:0000250" key="2">
    <source>
        <dbReference type="UniProtKB" id="O43557"/>
    </source>
</evidence>
<evidence type="ECO:0000255" key="3"/>
<evidence type="ECO:0000255" key="4">
    <source>
        <dbReference type="PROSITE-ProRule" id="PRU01387"/>
    </source>
</evidence>
<evidence type="ECO:0000305" key="5"/>
<sequence length="239" mass="26338">MESVVQPSVFVVDGQTDIPFRRLEQNHRRRRCGTVQVSLALVLLLGAGLATQGWFLLRLHQRLGDIVAHLPDGGKGSWEKLIQDQRSHQANPAAHLTGANASLIGIGGPLLWETRLGLAFLRGLTYHDGALVTMEPGYYYVYSKVQLSGVGCPQGLANGLPITHGLYKRTSRYPKELELLVSRRSPCGRANSSRVWWDSSFLGGVVHLEAGEEVVVRVPGNRLVRPRDGTRSYFGAFMV</sequence>
<feature type="chain" id="PRO_0000034534" description="Tumor necrosis factor ligand superfamily member 14, membrane form">
    <location>
        <begin position="1"/>
        <end position="239"/>
    </location>
</feature>
<feature type="chain" id="PRO_0000034535" description="Tumor necrosis factor ligand superfamily member 14, soluble form">
    <location>
        <begin position="82" status="uncertain"/>
        <end position="239"/>
    </location>
</feature>
<feature type="topological domain" description="Cytoplasmic" evidence="3">
    <location>
        <begin position="1"/>
        <end position="37"/>
    </location>
</feature>
<feature type="transmembrane region" description="Helical; Signal-anchor for type II membrane protein" evidence="3">
    <location>
        <begin position="38"/>
        <end position="58"/>
    </location>
</feature>
<feature type="topological domain" description="Extracellular" evidence="3">
    <location>
        <begin position="59"/>
        <end position="239"/>
    </location>
</feature>
<feature type="domain" description="THD" evidence="4">
    <location>
        <begin position="92"/>
        <end position="239"/>
    </location>
</feature>
<feature type="site" description="Cleavage" evidence="3">
    <location>
        <begin position="81"/>
        <end position="82"/>
    </location>
</feature>
<feature type="glycosylation site" description="N-linked (GlcNAc...) asparagine" evidence="3">
    <location>
        <position position="100"/>
    </location>
</feature>
<feature type="glycosylation site" description="N-linked (GlcNAc...) asparagine" evidence="3">
    <location>
        <position position="191"/>
    </location>
</feature>
<feature type="disulfide bond" evidence="4">
    <location>
        <begin position="152"/>
        <end position="187"/>
    </location>
</feature>
<proteinExistence type="evidence at transcript level"/>
<comment type="function">
    <text evidence="2">Cytokine that binds to TNFRSF3/LTBR. Binding to the decoy receptor TNFRSF6B modulates its effects. Activates NFKB and stimulates the proliferation of T-cells. Acts as a ligand for TNFRSF14/HVEM. Upon binding to TNFRSF14/HVEM, delivers costimulatory signals to T cells, leading to T cell proliferation and IFNG production (By similarity).</text>
</comment>
<comment type="subunit">
    <text evidence="2">Homotrimer. Interacts with TNFRSF14.</text>
</comment>
<comment type="subcellular location">
    <subcellularLocation>
        <location evidence="1">Cell membrane</location>
        <topology evidence="1">Single-pass type II membrane protein</topology>
    </subcellularLocation>
</comment>
<comment type="subcellular location">
    <molecule>Tumor necrosis factor ligand superfamily member 14, soluble form</molecule>
    <subcellularLocation>
        <location evidence="1">Secreted</location>
    </subcellularLocation>
</comment>
<comment type="PTM">
    <text>The soluble form derives from the membrane form by proteolytic processing.</text>
</comment>
<comment type="similarity">
    <text evidence="5">Belongs to the tumor necrosis factor family.</text>
</comment>
<organism>
    <name type="scientific">Mus musculus</name>
    <name type="common">Mouse</name>
    <dbReference type="NCBI Taxonomy" id="10090"/>
    <lineage>
        <taxon>Eukaryota</taxon>
        <taxon>Metazoa</taxon>
        <taxon>Chordata</taxon>
        <taxon>Craniata</taxon>
        <taxon>Vertebrata</taxon>
        <taxon>Euteleostomi</taxon>
        <taxon>Mammalia</taxon>
        <taxon>Eutheria</taxon>
        <taxon>Euarchontoglires</taxon>
        <taxon>Glires</taxon>
        <taxon>Rodentia</taxon>
        <taxon>Myomorpha</taxon>
        <taxon>Muroidea</taxon>
        <taxon>Muridae</taxon>
        <taxon>Murinae</taxon>
        <taxon>Mus</taxon>
        <taxon>Mus</taxon>
    </lineage>
</organism>